<organism>
    <name type="scientific">Triticum aestivum</name>
    <name type="common">Wheat</name>
    <dbReference type="NCBI Taxonomy" id="4565"/>
    <lineage>
        <taxon>Eukaryota</taxon>
        <taxon>Viridiplantae</taxon>
        <taxon>Streptophyta</taxon>
        <taxon>Embryophyta</taxon>
        <taxon>Tracheophyta</taxon>
        <taxon>Spermatophyta</taxon>
        <taxon>Magnoliopsida</taxon>
        <taxon>Liliopsida</taxon>
        <taxon>Poales</taxon>
        <taxon>Poaceae</taxon>
        <taxon>BOP clade</taxon>
        <taxon>Pooideae</taxon>
        <taxon>Triticodae</taxon>
        <taxon>Triticeae</taxon>
        <taxon>Triticinae</taxon>
        <taxon>Triticum</taxon>
    </lineage>
</organism>
<comment type="function">
    <text>Gliadin is the major seed storage protein in wheat.</text>
</comment>
<comment type="miscellaneous">
    <text>The gamma-gliadins can be divided into 3 homology classes. Sequence divergence between the classes is due to single-base substitutions and to duplications or deletions within or near direct repeats.</text>
</comment>
<comment type="similarity">
    <text evidence="2">Belongs to the gliadin/glutenin family.</text>
</comment>
<protein>
    <recommendedName>
        <fullName>Gamma-gliadin</fullName>
    </recommendedName>
</protein>
<evidence type="ECO:0000256" key="1">
    <source>
        <dbReference type="SAM" id="MobiDB-lite"/>
    </source>
</evidence>
<evidence type="ECO:0000305" key="2"/>
<keyword id="KW-0002">3D-structure</keyword>
<keyword id="KW-1185">Reference proteome</keyword>
<keyword id="KW-0677">Repeat</keyword>
<keyword id="KW-0708">Seed storage protein</keyword>
<keyword id="KW-0732">Signal</keyword>
<keyword id="KW-0758">Storage protein</keyword>
<name>GDB0_WHEAT</name>
<dbReference type="EMBL" id="M16060">
    <property type="protein sequence ID" value="AAA34288.1"/>
    <property type="molecule type" value="mRNA"/>
</dbReference>
<dbReference type="PIR" id="PS0094">
    <property type="entry name" value="PS0094"/>
</dbReference>
<dbReference type="PDB" id="5KSA">
    <property type="method" value="X-ray"/>
    <property type="resolution" value="2.00 A"/>
    <property type="chains" value="J=132-140"/>
</dbReference>
<dbReference type="PDB" id="5KSB">
    <property type="method" value="X-ray"/>
    <property type="resolution" value="2.90 A"/>
    <property type="chains" value="I/J=133-140"/>
</dbReference>
<dbReference type="PDBsum" id="5KSA"/>
<dbReference type="PDBsum" id="5KSB"/>
<dbReference type="SMR" id="P08079"/>
<dbReference type="STRING" id="4565.P08079"/>
<dbReference type="Allergome" id="3678">
    <property type="allergen name" value="Tri a 20"/>
</dbReference>
<dbReference type="Proteomes" id="UP000019116">
    <property type="component" value="Unplaced"/>
</dbReference>
<dbReference type="ExpressionAtlas" id="P08079">
    <property type="expression patterns" value="baseline and differential"/>
</dbReference>
<dbReference type="GO" id="GO:0045735">
    <property type="term" value="F:nutrient reservoir activity"/>
    <property type="evidence" value="ECO:0007669"/>
    <property type="project" value="UniProtKB-KW"/>
</dbReference>
<dbReference type="CDD" id="cd00261">
    <property type="entry name" value="AAI_SS"/>
    <property type="match status" value="1"/>
</dbReference>
<dbReference type="Gene3D" id="1.10.110.10">
    <property type="entry name" value="Plant lipid-transfer and hydrophobic proteins"/>
    <property type="match status" value="1"/>
</dbReference>
<dbReference type="InterPro" id="IPR036312">
    <property type="entry name" value="Bifun_inhib/LTP/seed_sf"/>
</dbReference>
<dbReference type="InterPro" id="IPR016140">
    <property type="entry name" value="Bifunc_inhib/LTP/seed_store"/>
</dbReference>
<dbReference type="InterPro" id="IPR001954">
    <property type="entry name" value="Glia_glutenin"/>
</dbReference>
<dbReference type="PANTHER" id="PTHR33454:SF16">
    <property type="entry name" value="GAMMA-GLIADIN"/>
    <property type="match status" value="1"/>
</dbReference>
<dbReference type="PANTHER" id="PTHR33454">
    <property type="entry name" value="PROLAMIN PPROL 14P"/>
    <property type="match status" value="1"/>
</dbReference>
<dbReference type="Pfam" id="PF13016">
    <property type="entry name" value="Gliadin"/>
    <property type="match status" value="1"/>
</dbReference>
<dbReference type="PRINTS" id="PR00208">
    <property type="entry name" value="GLIADGLUTEN"/>
</dbReference>
<dbReference type="PRINTS" id="PR00209">
    <property type="entry name" value="GLIADIN"/>
</dbReference>
<dbReference type="SUPFAM" id="SSF47699">
    <property type="entry name" value="Bifunctional inhibitor/lipid-transfer protein/seed storage 2S albumin"/>
    <property type="match status" value="1"/>
</dbReference>
<reference key="1">
    <citation type="journal article" date="1985" name="Plant Sci. Lett.">
        <title>Heptapeptide repeat structure of a wheat gamma-gliadin.</title>
        <authorList>
            <person name="Scheets K."/>
            <person name="Rafalski J.A."/>
            <person name="Hedgcoth C."/>
            <person name="Soell D.G."/>
        </authorList>
    </citation>
    <scope>NUCLEOTIDE SEQUENCE [MRNA]</scope>
</reference>
<proteinExistence type="evidence at protein level"/>
<sequence>MKTLLILTILAMAITIGTANMQVDPSSQVQWPQQQPVPQPHQPFSQQPQQTFPQPQQTFPHQPQQQFPQPQQPQQQFLQPQQPFPQQPQQPYPQQPQQPFPQTQQPQQLFPQSQQPQQQFSQPQQQFPQPQQPQQSFPQQQPPFIQPSLQQQVNPCKNFLLQQCKPVSLVSSLWSMIWPQSDCQVMRQQCCQQLAQIPQQLQCAAIHTIIHSIIMQQEQQEQQQGMHILLPLYQQQQVGQGTLVQGQGIIQ</sequence>
<accession>P08079</accession>
<feature type="signal peptide">
    <location>
        <begin position="1"/>
        <end position="19"/>
    </location>
</feature>
<feature type="chain" id="PRO_0000032277" description="Gamma-gliadin">
    <location>
        <begin position="20"/>
        <end position="251" status="greater than"/>
    </location>
</feature>
<feature type="region of interest" description="Disordered" evidence="1">
    <location>
        <begin position="26"/>
        <end position="143"/>
    </location>
</feature>
<feature type="compositionally biased region" description="Low complexity" evidence="1">
    <location>
        <begin position="42"/>
        <end position="81"/>
    </location>
</feature>
<feature type="compositionally biased region" description="Pro residues" evidence="1">
    <location>
        <begin position="82"/>
        <end position="99"/>
    </location>
</feature>
<feature type="compositionally biased region" description="Low complexity" evidence="1">
    <location>
        <begin position="100"/>
        <end position="139"/>
    </location>
</feature>
<feature type="non-terminal residue">
    <location>
        <position position="251"/>
    </location>
</feature>